<comment type="function">
    <text evidence="1">Transfers and isomerizes the ribose moiety from AdoMet to the 7-aminomethyl group of 7-deazaguanine (preQ1-tRNA) to give epoxyqueuosine (oQ-tRNA).</text>
</comment>
<comment type="catalytic activity">
    <reaction evidence="1">
        <text>7-aminomethyl-7-carbaguanosine(34) in tRNA + S-adenosyl-L-methionine = epoxyqueuosine(34) in tRNA + adenine + L-methionine + 2 H(+)</text>
        <dbReference type="Rhea" id="RHEA:32155"/>
        <dbReference type="Rhea" id="RHEA-COMP:10342"/>
        <dbReference type="Rhea" id="RHEA-COMP:18582"/>
        <dbReference type="ChEBI" id="CHEBI:15378"/>
        <dbReference type="ChEBI" id="CHEBI:16708"/>
        <dbReference type="ChEBI" id="CHEBI:57844"/>
        <dbReference type="ChEBI" id="CHEBI:59789"/>
        <dbReference type="ChEBI" id="CHEBI:82833"/>
        <dbReference type="ChEBI" id="CHEBI:194443"/>
        <dbReference type="EC" id="2.4.99.17"/>
    </reaction>
</comment>
<comment type="pathway">
    <text evidence="1">tRNA modification; tRNA-queuosine biosynthesis.</text>
</comment>
<comment type="subunit">
    <text evidence="1">Monomer.</text>
</comment>
<comment type="subcellular location">
    <subcellularLocation>
        <location evidence="1">Cytoplasm</location>
    </subcellularLocation>
</comment>
<comment type="similarity">
    <text evidence="1">Belongs to the QueA family.</text>
</comment>
<sequence>MDINLFDFHLPEELIAQVPLEERETSRLMVLDRETGDIEHKHFTDILSYLHEGDCLVLNETKVMPARLHGVKEDTGAHIEVLLLKQEEGDKWETLVKPAKRVKEGTVISFGEGKLKATCTGTADQGGRQLEFSYDGIFYEILDELGEMPLPPYIKETLEDRDRYQTVYAKEIGSAAAPTAGLHFTEELLEKLKQKGVELAFITLHVGLGTFRPVSADTIEEHHMHAEYYHMSEETAALLNRVKENGGRIITVGTTSTRTLETIATDHDGKLCAASGWTDIFMYPGYEFKAIDGLITNFHLPKSTLIMLVSAFANRDNVLHAYNEAVKEKYRFFSFGDAMFVASHAKMGNK</sequence>
<reference key="1">
    <citation type="submission" date="2009-04" db="EMBL/GenBank/DDBJ databases">
        <title>Genome sequence of Bacillus anthracis A0248.</title>
        <authorList>
            <person name="Dodson R.J."/>
            <person name="Munk A.C."/>
            <person name="Bruce D."/>
            <person name="Detter C."/>
            <person name="Tapia R."/>
            <person name="Sutton G."/>
            <person name="Sims D."/>
            <person name="Brettin T."/>
        </authorList>
    </citation>
    <scope>NUCLEOTIDE SEQUENCE [LARGE SCALE GENOMIC DNA]</scope>
    <source>
        <strain>A0248</strain>
    </source>
</reference>
<evidence type="ECO:0000255" key="1">
    <source>
        <dbReference type="HAMAP-Rule" id="MF_00113"/>
    </source>
</evidence>
<feature type="chain" id="PRO_1000119139" description="S-adenosylmethionine:tRNA ribosyltransferase-isomerase">
    <location>
        <begin position="1"/>
        <end position="350"/>
    </location>
</feature>
<name>QUEA_BACAA</name>
<proteinExistence type="inferred from homology"/>
<protein>
    <recommendedName>
        <fullName evidence="1">S-adenosylmethionine:tRNA ribosyltransferase-isomerase</fullName>
        <ecNumber evidence="1">2.4.99.17</ecNumber>
    </recommendedName>
    <alternativeName>
        <fullName evidence="1">Queuosine biosynthesis protein QueA</fullName>
    </alternativeName>
</protein>
<accession>C3P9A5</accession>
<gene>
    <name evidence="1" type="primary">queA</name>
    <name type="ordered locus">BAA_4665</name>
</gene>
<keyword id="KW-0963">Cytoplasm</keyword>
<keyword id="KW-0671">Queuosine biosynthesis</keyword>
<keyword id="KW-0949">S-adenosyl-L-methionine</keyword>
<keyword id="KW-0808">Transferase</keyword>
<dbReference type="EC" id="2.4.99.17" evidence="1"/>
<dbReference type="EMBL" id="CP001598">
    <property type="protein sequence ID" value="ACQ48771.1"/>
    <property type="molecule type" value="Genomic_DNA"/>
</dbReference>
<dbReference type="RefSeq" id="WP_000354028.1">
    <property type="nucleotide sequence ID" value="NC_012659.1"/>
</dbReference>
<dbReference type="SMR" id="C3P9A5"/>
<dbReference type="GeneID" id="93006683"/>
<dbReference type="KEGG" id="bai:BAA_4665"/>
<dbReference type="HOGENOM" id="CLU_039110_1_0_9"/>
<dbReference type="UniPathway" id="UPA00392"/>
<dbReference type="GO" id="GO:0005737">
    <property type="term" value="C:cytoplasm"/>
    <property type="evidence" value="ECO:0007669"/>
    <property type="project" value="UniProtKB-SubCell"/>
</dbReference>
<dbReference type="GO" id="GO:0051075">
    <property type="term" value="F:S-adenosylmethionine:tRNA ribosyltransferase-isomerase activity"/>
    <property type="evidence" value="ECO:0007669"/>
    <property type="project" value="UniProtKB-EC"/>
</dbReference>
<dbReference type="GO" id="GO:0008616">
    <property type="term" value="P:queuosine biosynthetic process"/>
    <property type="evidence" value="ECO:0007669"/>
    <property type="project" value="UniProtKB-UniRule"/>
</dbReference>
<dbReference type="GO" id="GO:0002099">
    <property type="term" value="P:tRNA wobble guanine modification"/>
    <property type="evidence" value="ECO:0007669"/>
    <property type="project" value="TreeGrafter"/>
</dbReference>
<dbReference type="FunFam" id="2.40.10.240:FF:000002">
    <property type="entry name" value="S-adenosylmethionine:tRNA ribosyltransferase-isomerase"/>
    <property type="match status" value="1"/>
</dbReference>
<dbReference type="FunFam" id="3.40.1780.10:FF:000001">
    <property type="entry name" value="S-adenosylmethionine:tRNA ribosyltransferase-isomerase"/>
    <property type="match status" value="1"/>
</dbReference>
<dbReference type="Gene3D" id="2.40.10.240">
    <property type="entry name" value="QueA-like"/>
    <property type="match status" value="1"/>
</dbReference>
<dbReference type="Gene3D" id="3.40.1780.10">
    <property type="entry name" value="QueA-like"/>
    <property type="match status" value="1"/>
</dbReference>
<dbReference type="HAMAP" id="MF_00113">
    <property type="entry name" value="QueA"/>
    <property type="match status" value="1"/>
</dbReference>
<dbReference type="InterPro" id="IPR003699">
    <property type="entry name" value="QueA"/>
</dbReference>
<dbReference type="InterPro" id="IPR042118">
    <property type="entry name" value="QueA_dom1"/>
</dbReference>
<dbReference type="InterPro" id="IPR042119">
    <property type="entry name" value="QueA_dom2"/>
</dbReference>
<dbReference type="InterPro" id="IPR036100">
    <property type="entry name" value="QueA_sf"/>
</dbReference>
<dbReference type="NCBIfam" id="NF001140">
    <property type="entry name" value="PRK00147.1"/>
    <property type="match status" value="1"/>
</dbReference>
<dbReference type="NCBIfam" id="TIGR00113">
    <property type="entry name" value="queA"/>
    <property type="match status" value="1"/>
</dbReference>
<dbReference type="PANTHER" id="PTHR30307">
    <property type="entry name" value="S-ADENOSYLMETHIONINE:TRNA RIBOSYLTRANSFERASE-ISOMERASE"/>
    <property type="match status" value="1"/>
</dbReference>
<dbReference type="PANTHER" id="PTHR30307:SF0">
    <property type="entry name" value="S-ADENOSYLMETHIONINE:TRNA RIBOSYLTRANSFERASE-ISOMERASE"/>
    <property type="match status" value="1"/>
</dbReference>
<dbReference type="Pfam" id="PF02547">
    <property type="entry name" value="Queuosine_synth"/>
    <property type="match status" value="1"/>
</dbReference>
<dbReference type="SUPFAM" id="SSF111337">
    <property type="entry name" value="QueA-like"/>
    <property type="match status" value="1"/>
</dbReference>
<organism>
    <name type="scientific">Bacillus anthracis (strain A0248)</name>
    <dbReference type="NCBI Taxonomy" id="592021"/>
    <lineage>
        <taxon>Bacteria</taxon>
        <taxon>Bacillati</taxon>
        <taxon>Bacillota</taxon>
        <taxon>Bacilli</taxon>
        <taxon>Bacillales</taxon>
        <taxon>Bacillaceae</taxon>
        <taxon>Bacillus</taxon>
        <taxon>Bacillus cereus group</taxon>
    </lineage>
</organism>